<protein>
    <recommendedName>
        <fullName evidence="1">Glutamate--tRNA ligase 1</fullName>
        <ecNumber evidence="1">6.1.1.17</ecNumber>
    </recommendedName>
    <alternativeName>
        <fullName evidence="1">Glutamyl-tRNA synthetase 1</fullName>
        <shortName evidence="1">GluRS 1</shortName>
    </alternativeName>
</protein>
<gene>
    <name evidence="1" type="primary">gltX1</name>
    <name type="ordered locus">GOX1268</name>
</gene>
<dbReference type="EC" id="6.1.1.17" evidence="1"/>
<dbReference type="EMBL" id="CP000009">
    <property type="protein sequence ID" value="AAW61029.1"/>
    <property type="molecule type" value="Genomic_DNA"/>
</dbReference>
<dbReference type="RefSeq" id="WP_011252821.1">
    <property type="nucleotide sequence ID" value="NC_006677.1"/>
</dbReference>
<dbReference type="SMR" id="Q5FRG7"/>
<dbReference type="STRING" id="290633.GOX1268"/>
<dbReference type="KEGG" id="gox:GOX1268"/>
<dbReference type="eggNOG" id="COG0008">
    <property type="taxonomic scope" value="Bacteria"/>
</dbReference>
<dbReference type="HOGENOM" id="CLU_015768_6_3_5"/>
<dbReference type="Proteomes" id="UP000006375">
    <property type="component" value="Chromosome"/>
</dbReference>
<dbReference type="GO" id="GO:0005829">
    <property type="term" value="C:cytosol"/>
    <property type="evidence" value="ECO:0007669"/>
    <property type="project" value="TreeGrafter"/>
</dbReference>
<dbReference type="GO" id="GO:0005524">
    <property type="term" value="F:ATP binding"/>
    <property type="evidence" value="ECO:0007669"/>
    <property type="project" value="UniProtKB-UniRule"/>
</dbReference>
<dbReference type="GO" id="GO:0004818">
    <property type="term" value="F:glutamate-tRNA ligase activity"/>
    <property type="evidence" value="ECO:0007669"/>
    <property type="project" value="UniProtKB-UniRule"/>
</dbReference>
<dbReference type="GO" id="GO:0000049">
    <property type="term" value="F:tRNA binding"/>
    <property type="evidence" value="ECO:0007669"/>
    <property type="project" value="InterPro"/>
</dbReference>
<dbReference type="GO" id="GO:0008270">
    <property type="term" value="F:zinc ion binding"/>
    <property type="evidence" value="ECO:0007669"/>
    <property type="project" value="InterPro"/>
</dbReference>
<dbReference type="GO" id="GO:0006424">
    <property type="term" value="P:glutamyl-tRNA aminoacylation"/>
    <property type="evidence" value="ECO:0007669"/>
    <property type="project" value="UniProtKB-UniRule"/>
</dbReference>
<dbReference type="CDD" id="cd00808">
    <property type="entry name" value="GluRS_core"/>
    <property type="match status" value="1"/>
</dbReference>
<dbReference type="FunFam" id="3.40.50.620:FF:000007">
    <property type="entry name" value="Glutamate--tRNA ligase"/>
    <property type="match status" value="1"/>
</dbReference>
<dbReference type="Gene3D" id="1.10.10.350">
    <property type="match status" value="1"/>
</dbReference>
<dbReference type="Gene3D" id="3.40.50.620">
    <property type="entry name" value="HUPs"/>
    <property type="match status" value="1"/>
</dbReference>
<dbReference type="HAMAP" id="MF_00022">
    <property type="entry name" value="Glu_tRNA_synth_type1"/>
    <property type="match status" value="1"/>
</dbReference>
<dbReference type="InterPro" id="IPR045462">
    <property type="entry name" value="aa-tRNA-synth_I_cd-bd"/>
</dbReference>
<dbReference type="InterPro" id="IPR020751">
    <property type="entry name" value="aa-tRNA-synth_I_codon-bd_sub2"/>
</dbReference>
<dbReference type="InterPro" id="IPR001412">
    <property type="entry name" value="aa-tRNA-synth_I_CS"/>
</dbReference>
<dbReference type="InterPro" id="IPR008925">
    <property type="entry name" value="aa_tRNA-synth_I_cd-bd_sf"/>
</dbReference>
<dbReference type="InterPro" id="IPR004527">
    <property type="entry name" value="Glu-tRNA-ligase_bac/mito"/>
</dbReference>
<dbReference type="InterPro" id="IPR000924">
    <property type="entry name" value="Glu/Gln-tRNA-synth"/>
</dbReference>
<dbReference type="InterPro" id="IPR020058">
    <property type="entry name" value="Glu/Gln-tRNA-synth_Ib_cat-dom"/>
</dbReference>
<dbReference type="InterPro" id="IPR049940">
    <property type="entry name" value="GluQ/Sye"/>
</dbReference>
<dbReference type="InterPro" id="IPR033910">
    <property type="entry name" value="GluRS_core"/>
</dbReference>
<dbReference type="InterPro" id="IPR014729">
    <property type="entry name" value="Rossmann-like_a/b/a_fold"/>
</dbReference>
<dbReference type="NCBIfam" id="TIGR00464">
    <property type="entry name" value="gltX_bact"/>
    <property type="match status" value="1"/>
</dbReference>
<dbReference type="PANTHER" id="PTHR43311">
    <property type="entry name" value="GLUTAMATE--TRNA LIGASE"/>
    <property type="match status" value="1"/>
</dbReference>
<dbReference type="PANTHER" id="PTHR43311:SF2">
    <property type="entry name" value="GLUTAMATE--TRNA LIGASE, MITOCHONDRIAL-RELATED"/>
    <property type="match status" value="1"/>
</dbReference>
<dbReference type="Pfam" id="PF19269">
    <property type="entry name" value="Anticodon_2"/>
    <property type="match status" value="1"/>
</dbReference>
<dbReference type="Pfam" id="PF00749">
    <property type="entry name" value="tRNA-synt_1c"/>
    <property type="match status" value="1"/>
</dbReference>
<dbReference type="PRINTS" id="PR00987">
    <property type="entry name" value="TRNASYNTHGLU"/>
</dbReference>
<dbReference type="SUPFAM" id="SSF48163">
    <property type="entry name" value="An anticodon-binding domain of class I aminoacyl-tRNA synthetases"/>
    <property type="match status" value="1"/>
</dbReference>
<dbReference type="SUPFAM" id="SSF52374">
    <property type="entry name" value="Nucleotidylyl transferase"/>
    <property type="match status" value="1"/>
</dbReference>
<dbReference type="PROSITE" id="PS00178">
    <property type="entry name" value="AA_TRNA_LIGASE_I"/>
    <property type="match status" value="1"/>
</dbReference>
<sequence length="472" mass="52303">MTIRTRFAPSPTGLLHVGNARAALFNFLFARHHGGEFLLRIEDTDKERSTQKAVDVIFDGLAWMGIEADAEPVFQSARQDRHTEVALELLAKGQAYKCFCTPEELTAMREKAMAEKRPPRYDGTWRDRDPSEAPEGAPYVVRLKAPREGETVIKDLVQGEVRVANAEMDDLILLRSDGTPTYLHAVVCDDHDMEITHVMRGDDHLTNTFRQAMIYRAMGWDLPHFAHLPLIHGPDGAKLSKRHGAQSVVDFREEGYLPEALCNYLLRLGWGHGDAEVLSREEQIKLFDLDGVGRSPSRMDYVKLAHLNGIWMRQADDERLTNDVMERLQGREGVVTDDKTRARILAMMPGLKERAKTLVELADNAAFAGFTLPLTFTPKAEKLLGEDGRRVLEGVGKELAALKDFTPEAIDATLRSYAEKHEIKLGSVAQPLRAAMTGSTTSPGIDLTLSALGQDEVLARIAAVLASGSANA</sequence>
<accession>Q5FRG7</accession>
<proteinExistence type="inferred from homology"/>
<reference key="1">
    <citation type="journal article" date="2005" name="Nat. Biotechnol.">
        <title>Complete genome sequence of the acetic acid bacterium Gluconobacter oxydans.</title>
        <authorList>
            <person name="Prust C."/>
            <person name="Hoffmeister M."/>
            <person name="Liesegang H."/>
            <person name="Wiezer A."/>
            <person name="Fricke W.F."/>
            <person name="Ehrenreich A."/>
            <person name="Gottschalk G."/>
            <person name="Deppenmeier U."/>
        </authorList>
    </citation>
    <scope>NUCLEOTIDE SEQUENCE [LARGE SCALE GENOMIC DNA]</scope>
    <source>
        <strain>621H</strain>
    </source>
</reference>
<comment type="function">
    <text evidence="1">Catalyzes the attachment of glutamate to tRNA(Glu) in a two-step reaction: glutamate is first activated by ATP to form Glu-AMP and then transferred to the acceptor end of tRNA(Glu).</text>
</comment>
<comment type="catalytic activity">
    <reaction evidence="1">
        <text>tRNA(Glu) + L-glutamate + ATP = L-glutamyl-tRNA(Glu) + AMP + diphosphate</text>
        <dbReference type="Rhea" id="RHEA:23540"/>
        <dbReference type="Rhea" id="RHEA-COMP:9663"/>
        <dbReference type="Rhea" id="RHEA-COMP:9680"/>
        <dbReference type="ChEBI" id="CHEBI:29985"/>
        <dbReference type="ChEBI" id="CHEBI:30616"/>
        <dbReference type="ChEBI" id="CHEBI:33019"/>
        <dbReference type="ChEBI" id="CHEBI:78442"/>
        <dbReference type="ChEBI" id="CHEBI:78520"/>
        <dbReference type="ChEBI" id="CHEBI:456215"/>
        <dbReference type="EC" id="6.1.1.17"/>
    </reaction>
</comment>
<comment type="subunit">
    <text evidence="1">Monomer.</text>
</comment>
<comment type="subcellular location">
    <subcellularLocation>
        <location evidence="1">Cytoplasm</location>
    </subcellularLocation>
</comment>
<comment type="similarity">
    <text evidence="1">Belongs to the class-I aminoacyl-tRNA synthetase family. Glutamate--tRNA ligase type 1 subfamily.</text>
</comment>
<organism>
    <name type="scientific">Gluconobacter oxydans (strain 621H)</name>
    <name type="common">Gluconobacter suboxydans</name>
    <dbReference type="NCBI Taxonomy" id="290633"/>
    <lineage>
        <taxon>Bacteria</taxon>
        <taxon>Pseudomonadati</taxon>
        <taxon>Pseudomonadota</taxon>
        <taxon>Alphaproteobacteria</taxon>
        <taxon>Acetobacterales</taxon>
        <taxon>Acetobacteraceae</taxon>
        <taxon>Gluconobacter</taxon>
    </lineage>
</organism>
<feature type="chain" id="PRO_0000119569" description="Glutamate--tRNA ligase 1">
    <location>
        <begin position="1"/>
        <end position="472"/>
    </location>
</feature>
<feature type="region of interest" description="Disordered" evidence="2">
    <location>
        <begin position="112"/>
        <end position="133"/>
    </location>
</feature>
<feature type="short sequence motif" description="'HIGH' region" evidence="1">
    <location>
        <begin position="9"/>
        <end position="19"/>
    </location>
</feature>
<feature type="short sequence motif" description="'KMSKS' region" evidence="1">
    <location>
        <begin position="238"/>
        <end position="242"/>
    </location>
</feature>
<feature type="compositionally biased region" description="Basic and acidic residues" evidence="2">
    <location>
        <begin position="112"/>
        <end position="131"/>
    </location>
</feature>
<feature type="binding site" evidence="1">
    <location>
        <position position="241"/>
    </location>
    <ligand>
        <name>ATP</name>
        <dbReference type="ChEBI" id="CHEBI:30616"/>
    </ligand>
</feature>
<keyword id="KW-0030">Aminoacyl-tRNA synthetase</keyword>
<keyword id="KW-0067">ATP-binding</keyword>
<keyword id="KW-0963">Cytoplasm</keyword>
<keyword id="KW-0436">Ligase</keyword>
<keyword id="KW-0547">Nucleotide-binding</keyword>
<keyword id="KW-0648">Protein biosynthesis</keyword>
<keyword id="KW-1185">Reference proteome</keyword>
<evidence type="ECO:0000255" key="1">
    <source>
        <dbReference type="HAMAP-Rule" id="MF_00022"/>
    </source>
</evidence>
<evidence type="ECO:0000256" key="2">
    <source>
        <dbReference type="SAM" id="MobiDB-lite"/>
    </source>
</evidence>
<name>SYE1_GLUOX</name>